<reference key="1">
    <citation type="journal article" date="2005" name="Proc. Natl. Acad. Sci. U.S.A.">
        <title>Complete genome sequence of the probiotic lactic acid bacterium Lactobacillus acidophilus NCFM.</title>
        <authorList>
            <person name="Altermann E."/>
            <person name="Russell W.M."/>
            <person name="Azcarate-Peril M.A."/>
            <person name="Barrangou R."/>
            <person name="Buck B.L."/>
            <person name="McAuliffe O."/>
            <person name="Souther N."/>
            <person name="Dobson A."/>
            <person name="Duong T."/>
            <person name="Callanan M."/>
            <person name="Lick S."/>
            <person name="Hamrick A."/>
            <person name="Cano R."/>
            <person name="Klaenhammer T.R."/>
        </authorList>
    </citation>
    <scope>NUCLEOTIDE SEQUENCE [LARGE SCALE GENOMIC DNA]</scope>
    <source>
        <strain>ATCC 700396 / NCK56 / N2 / NCFM</strain>
    </source>
</reference>
<protein>
    <recommendedName>
        <fullName evidence="2">Small ribosomal subunit protein uS19</fullName>
    </recommendedName>
    <alternativeName>
        <fullName>30S ribosomal protein S19</fullName>
    </alternativeName>
</protein>
<evidence type="ECO:0000250" key="1"/>
<evidence type="ECO:0000305" key="2"/>
<comment type="function">
    <text evidence="1">Protein S19 forms a complex with S13 that binds strongly to the 16S ribosomal RNA.</text>
</comment>
<comment type="similarity">
    <text evidence="2">Belongs to the universal ribosomal protein uS19 family.</text>
</comment>
<comment type="sequence caution" evidence="2">
    <conflict type="frameshift">
        <sequence resource="EMBL-CDS" id="AAV42188"/>
    </conflict>
</comment>
<proteinExistence type="inferred from homology"/>
<organism>
    <name type="scientific">Lactobacillus acidophilus (strain ATCC 700396 / NCK56 / N2 / NCFM)</name>
    <dbReference type="NCBI Taxonomy" id="272621"/>
    <lineage>
        <taxon>Bacteria</taxon>
        <taxon>Bacillati</taxon>
        <taxon>Bacillota</taxon>
        <taxon>Bacilli</taxon>
        <taxon>Lactobacillales</taxon>
        <taxon>Lactobacillaceae</taxon>
        <taxon>Lactobacillus</taxon>
    </lineage>
</organism>
<dbReference type="EMBL" id="CP000033">
    <property type="protein sequence ID" value="AAV42188.1"/>
    <property type="status" value="ALT_FRAME"/>
    <property type="molecule type" value="Genomic_DNA"/>
</dbReference>
<dbReference type="SMR" id="Q5FM86"/>
<dbReference type="STRING" id="272621.LBA0295"/>
<dbReference type="KEGG" id="lac:LBA0295"/>
<dbReference type="HOGENOM" id="CLU_144911_3_0_9"/>
<dbReference type="Proteomes" id="UP000006381">
    <property type="component" value="Chromosome"/>
</dbReference>
<dbReference type="GO" id="GO:0005737">
    <property type="term" value="C:cytoplasm"/>
    <property type="evidence" value="ECO:0007669"/>
    <property type="project" value="UniProtKB-ARBA"/>
</dbReference>
<dbReference type="GO" id="GO:0015935">
    <property type="term" value="C:small ribosomal subunit"/>
    <property type="evidence" value="ECO:0007669"/>
    <property type="project" value="InterPro"/>
</dbReference>
<dbReference type="GO" id="GO:0019843">
    <property type="term" value="F:rRNA binding"/>
    <property type="evidence" value="ECO:0007669"/>
    <property type="project" value="UniProtKB-UniRule"/>
</dbReference>
<dbReference type="GO" id="GO:0003735">
    <property type="term" value="F:structural constituent of ribosome"/>
    <property type="evidence" value="ECO:0007669"/>
    <property type="project" value="InterPro"/>
</dbReference>
<dbReference type="GO" id="GO:0000028">
    <property type="term" value="P:ribosomal small subunit assembly"/>
    <property type="evidence" value="ECO:0007669"/>
    <property type="project" value="TreeGrafter"/>
</dbReference>
<dbReference type="GO" id="GO:0006412">
    <property type="term" value="P:translation"/>
    <property type="evidence" value="ECO:0007669"/>
    <property type="project" value="UniProtKB-UniRule"/>
</dbReference>
<dbReference type="FunFam" id="3.30.860.10:FF:000001">
    <property type="entry name" value="30S ribosomal protein S19"/>
    <property type="match status" value="1"/>
</dbReference>
<dbReference type="Gene3D" id="3.30.860.10">
    <property type="entry name" value="30s Ribosomal Protein S19, Chain A"/>
    <property type="match status" value="1"/>
</dbReference>
<dbReference type="HAMAP" id="MF_00531">
    <property type="entry name" value="Ribosomal_uS19"/>
    <property type="match status" value="1"/>
</dbReference>
<dbReference type="InterPro" id="IPR002222">
    <property type="entry name" value="Ribosomal_uS19"/>
</dbReference>
<dbReference type="InterPro" id="IPR005732">
    <property type="entry name" value="Ribosomal_uS19_bac-type"/>
</dbReference>
<dbReference type="InterPro" id="IPR020934">
    <property type="entry name" value="Ribosomal_uS19_CS"/>
</dbReference>
<dbReference type="InterPro" id="IPR023575">
    <property type="entry name" value="Ribosomal_uS19_SF"/>
</dbReference>
<dbReference type="NCBIfam" id="TIGR01050">
    <property type="entry name" value="rpsS_bact"/>
    <property type="match status" value="1"/>
</dbReference>
<dbReference type="PANTHER" id="PTHR11880">
    <property type="entry name" value="RIBOSOMAL PROTEIN S19P FAMILY MEMBER"/>
    <property type="match status" value="1"/>
</dbReference>
<dbReference type="PANTHER" id="PTHR11880:SF8">
    <property type="entry name" value="SMALL RIBOSOMAL SUBUNIT PROTEIN US19M"/>
    <property type="match status" value="1"/>
</dbReference>
<dbReference type="Pfam" id="PF00203">
    <property type="entry name" value="Ribosomal_S19"/>
    <property type="match status" value="1"/>
</dbReference>
<dbReference type="PIRSF" id="PIRSF002144">
    <property type="entry name" value="Ribosomal_S19"/>
    <property type="match status" value="1"/>
</dbReference>
<dbReference type="PRINTS" id="PR00975">
    <property type="entry name" value="RIBOSOMALS19"/>
</dbReference>
<dbReference type="SUPFAM" id="SSF54570">
    <property type="entry name" value="Ribosomal protein S19"/>
    <property type="match status" value="1"/>
</dbReference>
<dbReference type="PROSITE" id="PS00323">
    <property type="entry name" value="RIBOSOMAL_S19"/>
    <property type="match status" value="1"/>
</dbReference>
<name>RS19_LACAC</name>
<accession>Q5FM86</accession>
<gene>
    <name type="primary">rpsS</name>
    <name type="ordered locus">LBA0295</name>
</gene>
<feature type="chain" id="PRO_0000354293" description="Small ribosomal subunit protein uS19">
    <location>
        <begin position="1"/>
        <end position="94"/>
    </location>
</feature>
<keyword id="KW-1185">Reference proteome</keyword>
<keyword id="KW-0687">Ribonucleoprotein</keyword>
<keyword id="KW-0689">Ribosomal protein</keyword>
<keyword id="KW-0694">RNA-binding</keyword>
<keyword id="KW-0699">rRNA-binding</keyword>
<sequence>MSRSIKKGPFADASLLKKVDAQADADKKQVIKTWSRRSTIFPSFVGLTIAVYDGRKHVPVYITEDMVGHKLGEFVPTRTFHGHKSTDDKATSQS</sequence>